<reference key="1">
    <citation type="journal article" date="2008" name="BMC Genomics">
        <title>The linear chromosome of the plant-pathogenic mycoplasma 'Candidatus Phytoplasma mali'.</title>
        <authorList>
            <person name="Kube M."/>
            <person name="Schneider B."/>
            <person name="Kuhl H."/>
            <person name="Dandekar T."/>
            <person name="Heitmann K."/>
            <person name="Migdoll A.M."/>
            <person name="Reinhardt R."/>
            <person name="Seemueller E."/>
        </authorList>
    </citation>
    <scope>NUCLEOTIDE SEQUENCE [LARGE SCALE GENOMIC DNA]</scope>
    <source>
        <strain>AT</strain>
    </source>
</reference>
<dbReference type="EMBL" id="CU469464">
    <property type="protein sequence ID" value="CAP18547.1"/>
    <property type="molecule type" value="Genomic_DNA"/>
</dbReference>
<dbReference type="SMR" id="B3R010"/>
<dbReference type="STRING" id="37692.ATP_00360"/>
<dbReference type="KEGG" id="pml:ATP_00360"/>
<dbReference type="eggNOG" id="COG0200">
    <property type="taxonomic scope" value="Bacteria"/>
</dbReference>
<dbReference type="HOGENOM" id="CLU_055188_4_2_14"/>
<dbReference type="Proteomes" id="UP000002020">
    <property type="component" value="Chromosome"/>
</dbReference>
<dbReference type="GO" id="GO:0022625">
    <property type="term" value="C:cytosolic large ribosomal subunit"/>
    <property type="evidence" value="ECO:0007669"/>
    <property type="project" value="TreeGrafter"/>
</dbReference>
<dbReference type="GO" id="GO:0019843">
    <property type="term" value="F:rRNA binding"/>
    <property type="evidence" value="ECO:0007669"/>
    <property type="project" value="UniProtKB-UniRule"/>
</dbReference>
<dbReference type="GO" id="GO:0003735">
    <property type="term" value="F:structural constituent of ribosome"/>
    <property type="evidence" value="ECO:0007669"/>
    <property type="project" value="InterPro"/>
</dbReference>
<dbReference type="GO" id="GO:0006412">
    <property type="term" value="P:translation"/>
    <property type="evidence" value="ECO:0007669"/>
    <property type="project" value="UniProtKB-UniRule"/>
</dbReference>
<dbReference type="Gene3D" id="3.100.10.10">
    <property type="match status" value="1"/>
</dbReference>
<dbReference type="HAMAP" id="MF_01341">
    <property type="entry name" value="Ribosomal_uL15"/>
    <property type="match status" value="1"/>
</dbReference>
<dbReference type="InterPro" id="IPR030878">
    <property type="entry name" value="Ribosomal_uL15"/>
</dbReference>
<dbReference type="InterPro" id="IPR021131">
    <property type="entry name" value="Ribosomal_uL15/eL18"/>
</dbReference>
<dbReference type="InterPro" id="IPR036227">
    <property type="entry name" value="Ribosomal_uL15/eL18_sf"/>
</dbReference>
<dbReference type="InterPro" id="IPR005749">
    <property type="entry name" value="Ribosomal_uL15_bac-type"/>
</dbReference>
<dbReference type="NCBIfam" id="TIGR01071">
    <property type="entry name" value="rplO_bact"/>
    <property type="match status" value="1"/>
</dbReference>
<dbReference type="PANTHER" id="PTHR12934">
    <property type="entry name" value="50S RIBOSOMAL PROTEIN L15"/>
    <property type="match status" value="1"/>
</dbReference>
<dbReference type="PANTHER" id="PTHR12934:SF11">
    <property type="entry name" value="LARGE RIBOSOMAL SUBUNIT PROTEIN UL15M"/>
    <property type="match status" value="1"/>
</dbReference>
<dbReference type="Pfam" id="PF00828">
    <property type="entry name" value="Ribosomal_L27A"/>
    <property type="match status" value="1"/>
</dbReference>
<dbReference type="SUPFAM" id="SSF52080">
    <property type="entry name" value="Ribosomal proteins L15p and L18e"/>
    <property type="match status" value="1"/>
</dbReference>
<feature type="chain" id="PRO_1000166309" description="Large ribosomal subunit protein uL15">
    <location>
        <begin position="1"/>
        <end position="146"/>
    </location>
</feature>
<feature type="region of interest" description="Disordered" evidence="2">
    <location>
        <begin position="1"/>
        <end position="46"/>
    </location>
</feature>
<feature type="compositionally biased region" description="Basic residues" evidence="2">
    <location>
        <begin position="9"/>
        <end position="19"/>
    </location>
</feature>
<feature type="compositionally biased region" description="Gly residues" evidence="2">
    <location>
        <begin position="20"/>
        <end position="30"/>
    </location>
</feature>
<proteinExistence type="inferred from homology"/>
<comment type="function">
    <text evidence="1">Binds to the 23S rRNA.</text>
</comment>
<comment type="subunit">
    <text evidence="1">Part of the 50S ribosomal subunit.</text>
</comment>
<comment type="similarity">
    <text evidence="1">Belongs to the universal ribosomal protein uL15 family.</text>
</comment>
<gene>
    <name evidence="1" type="primary">rplO</name>
    <name type="ordered locus">ATP_00360</name>
</gene>
<keyword id="KW-1185">Reference proteome</keyword>
<keyword id="KW-0687">Ribonucleoprotein</keyword>
<keyword id="KW-0689">Ribosomal protein</keyword>
<keyword id="KW-0694">RNA-binding</keyword>
<keyword id="KW-0699">rRNA-binding</keyword>
<organism>
    <name type="scientific">Phytoplasma mali (strain AT)</name>
    <dbReference type="NCBI Taxonomy" id="482235"/>
    <lineage>
        <taxon>Bacteria</taxon>
        <taxon>Bacillati</taxon>
        <taxon>Mycoplasmatota</taxon>
        <taxon>Mollicutes</taxon>
        <taxon>Acholeplasmatales</taxon>
        <taxon>Acholeplasmataceae</taxon>
        <taxon>Candidatus Phytoplasma</taxon>
        <taxon>16SrX (Apple proliferation group)</taxon>
    </lineage>
</organism>
<name>RL15_PHYMT</name>
<sequence length="146" mass="15989">MLHQIKPFKGARKTVKRLGRGCGSGTGKTSGKGHKGQLARSGGGVRPGFEGGQIPFFQRIPKRGFHNINQKKYSIVNLGALEILENNTLVNQELLLEKKIIKSILPNGVKILSKGKLTKKLNFKVSKYSKKAQENIKLVGGNIEVN</sequence>
<protein>
    <recommendedName>
        <fullName evidence="1">Large ribosomal subunit protein uL15</fullName>
    </recommendedName>
    <alternativeName>
        <fullName evidence="3">50S ribosomal protein L15</fullName>
    </alternativeName>
</protein>
<evidence type="ECO:0000255" key="1">
    <source>
        <dbReference type="HAMAP-Rule" id="MF_01341"/>
    </source>
</evidence>
<evidence type="ECO:0000256" key="2">
    <source>
        <dbReference type="SAM" id="MobiDB-lite"/>
    </source>
</evidence>
<evidence type="ECO:0000305" key="3"/>
<accession>B3R010</accession>